<feature type="chain" id="PRO_0000235109" description="4-diphosphocytidyl-2-C-methyl-D-erythritol kinase">
    <location>
        <begin position="1"/>
        <end position="307"/>
    </location>
</feature>
<feature type="active site" evidence="1">
    <location>
        <position position="16"/>
    </location>
</feature>
<feature type="active site" evidence="1">
    <location>
        <position position="143"/>
    </location>
</feature>
<feature type="binding site" evidence="1">
    <location>
        <begin position="101"/>
        <end position="111"/>
    </location>
    <ligand>
        <name>ATP</name>
        <dbReference type="ChEBI" id="CHEBI:30616"/>
    </ligand>
</feature>
<gene>
    <name evidence="1" type="primary">ispE</name>
    <name type="ordered locus">NFA_49010</name>
</gene>
<proteinExistence type="inferred from homology"/>
<dbReference type="EC" id="2.7.1.148" evidence="1"/>
<dbReference type="EMBL" id="AP006618">
    <property type="protein sequence ID" value="BAD59753.1"/>
    <property type="molecule type" value="Genomic_DNA"/>
</dbReference>
<dbReference type="RefSeq" id="WP_011211436.1">
    <property type="nucleotide sequence ID" value="NC_006361.1"/>
</dbReference>
<dbReference type="SMR" id="Q5YPY8"/>
<dbReference type="STRING" id="247156.NFA_49010"/>
<dbReference type="GeneID" id="61135495"/>
<dbReference type="KEGG" id="nfa:NFA_49010"/>
<dbReference type="eggNOG" id="COG1947">
    <property type="taxonomic scope" value="Bacteria"/>
</dbReference>
<dbReference type="HOGENOM" id="CLU_053057_1_1_11"/>
<dbReference type="OrthoDB" id="3173073at2"/>
<dbReference type="UniPathway" id="UPA00056">
    <property type="reaction ID" value="UER00094"/>
</dbReference>
<dbReference type="Proteomes" id="UP000006820">
    <property type="component" value="Chromosome"/>
</dbReference>
<dbReference type="GO" id="GO:0050515">
    <property type="term" value="F:4-(cytidine 5'-diphospho)-2-C-methyl-D-erythritol kinase activity"/>
    <property type="evidence" value="ECO:0007669"/>
    <property type="project" value="UniProtKB-UniRule"/>
</dbReference>
<dbReference type="GO" id="GO:0005524">
    <property type="term" value="F:ATP binding"/>
    <property type="evidence" value="ECO:0007669"/>
    <property type="project" value="UniProtKB-UniRule"/>
</dbReference>
<dbReference type="GO" id="GO:0019288">
    <property type="term" value="P:isopentenyl diphosphate biosynthetic process, methylerythritol 4-phosphate pathway"/>
    <property type="evidence" value="ECO:0007669"/>
    <property type="project" value="UniProtKB-UniRule"/>
</dbReference>
<dbReference type="GO" id="GO:0016114">
    <property type="term" value="P:terpenoid biosynthetic process"/>
    <property type="evidence" value="ECO:0007669"/>
    <property type="project" value="InterPro"/>
</dbReference>
<dbReference type="Gene3D" id="3.30.230.10">
    <property type="match status" value="1"/>
</dbReference>
<dbReference type="Gene3D" id="3.30.70.890">
    <property type="entry name" value="GHMP kinase, C-terminal domain"/>
    <property type="match status" value="1"/>
</dbReference>
<dbReference type="HAMAP" id="MF_00061">
    <property type="entry name" value="IspE"/>
    <property type="match status" value="1"/>
</dbReference>
<dbReference type="InterPro" id="IPR013750">
    <property type="entry name" value="GHMP_kinase_C_dom"/>
</dbReference>
<dbReference type="InterPro" id="IPR036554">
    <property type="entry name" value="GHMP_kinase_C_sf"/>
</dbReference>
<dbReference type="InterPro" id="IPR006204">
    <property type="entry name" value="GHMP_kinase_N_dom"/>
</dbReference>
<dbReference type="InterPro" id="IPR004424">
    <property type="entry name" value="IspE"/>
</dbReference>
<dbReference type="InterPro" id="IPR020568">
    <property type="entry name" value="Ribosomal_Su5_D2-typ_SF"/>
</dbReference>
<dbReference type="InterPro" id="IPR014721">
    <property type="entry name" value="Ribsml_uS5_D2-typ_fold_subgr"/>
</dbReference>
<dbReference type="NCBIfam" id="TIGR00154">
    <property type="entry name" value="ispE"/>
    <property type="match status" value="1"/>
</dbReference>
<dbReference type="NCBIfam" id="NF002870">
    <property type="entry name" value="PRK03188.1"/>
    <property type="match status" value="1"/>
</dbReference>
<dbReference type="PANTHER" id="PTHR43527">
    <property type="entry name" value="4-DIPHOSPHOCYTIDYL-2-C-METHYL-D-ERYTHRITOL KINASE, CHLOROPLASTIC"/>
    <property type="match status" value="1"/>
</dbReference>
<dbReference type="PANTHER" id="PTHR43527:SF2">
    <property type="entry name" value="4-DIPHOSPHOCYTIDYL-2-C-METHYL-D-ERYTHRITOL KINASE, CHLOROPLASTIC"/>
    <property type="match status" value="1"/>
</dbReference>
<dbReference type="Pfam" id="PF08544">
    <property type="entry name" value="GHMP_kinases_C"/>
    <property type="match status" value="1"/>
</dbReference>
<dbReference type="Pfam" id="PF00288">
    <property type="entry name" value="GHMP_kinases_N"/>
    <property type="match status" value="1"/>
</dbReference>
<dbReference type="PIRSF" id="PIRSF010376">
    <property type="entry name" value="IspE"/>
    <property type="match status" value="1"/>
</dbReference>
<dbReference type="SUPFAM" id="SSF55060">
    <property type="entry name" value="GHMP Kinase, C-terminal domain"/>
    <property type="match status" value="1"/>
</dbReference>
<dbReference type="SUPFAM" id="SSF54211">
    <property type="entry name" value="Ribosomal protein S5 domain 2-like"/>
    <property type="match status" value="1"/>
</dbReference>
<protein>
    <recommendedName>
        <fullName evidence="1">4-diphosphocytidyl-2-C-methyl-D-erythritol kinase</fullName>
        <shortName evidence="1">CMK</shortName>
        <ecNumber evidence="1">2.7.1.148</ecNumber>
    </recommendedName>
    <alternativeName>
        <fullName evidence="1">4-(cytidine-5'-diphospho)-2-C-methyl-D-erythritol kinase</fullName>
    </alternativeName>
</protein>
<comment type="function">
    <text evidence="1">Catalyzes the phosphorylation of the position 2 hydroxy group of 4-diphosphocytidyl-2C-methyl-D-erythritol.</text>
</comment>
<comment type="catalytic activity">
    <reaction evidence="1">
        <text>4-CDP-2-C-methyl-D-erythritol + ATP = 4-CDP-2-C-methyl-D-erythritol 2-phosphate + ADP + H(+)</text>
        <dbReference type="Rhea" id="RHEA:18437"/>
        <dbReference type="ChEBI" id="CHEBI:15378"/>
        <dbReference type="ChEBI" id="CHEBI:30616"/>
        <dbReference type="ChEBI" id="CHEBI:57823"/>
        <dbReference type="ChEBI" id="CHEBI:57919"/>
        <dbReference type="ChEBI" id="CHEBI:456216"/>
        <dbReference type="EC" id="2.7.1.148"/>
    </reaction>
</comment>
<comment type="pathway">
    <text evidence="1">Isoprenoid biosynthesis; isopentenyl diphosphate biosynthesis via DXP pathway; isopentenyl diphosphate from 1-deoxy-D-xylulose 5-phosphate: step 3/6.</text>
</comment>
<comment type="similarity">
    <text evidence="1">Belongs to the GHMP kinase family. IspE subfamily.</text>
</comment>
<organism>
    <name type="scientific">Nocardia farcinica (strain IFM 10152)</name>
    <dbReference type="NCBI Taxonomy" id="247156"/>
    <lineage>
        <taxon>Bacteria</taxon>
        <taxon>Bacillati</taxon>
        <taxon>Actinomycetota</taxon>
        <taxon>Actinomycetes</taxon>
        <taxon>Mycobacteriales</taxon>
        <taxon>Nocardiaceae</taxon>
        <taxon>Nocardia</taxon>
    </lineage>
</organism>
<sequence>MLSVVPSPVLVRAPSKVNLHLGVGDLRPDGYHDLTTVFQALSLGDDLRISPASALTVKVNGEGAAEVPTDRTNLVWKAAVRLAHLVGRAPLVEIVIDKGIPVAGGMAGGSADAAAALVGLNELWDMGLGRDELSALAAELGSDVPFALHGGTALGTGRGERLLPVLSRNTFHWVLAFAKGGLSTPAVFAELDRLREHGDPPRLGDPQALMQALASGDPAQLAPLLGNDLQAAAVSLKPELRRTLRAGVTAGALAGLVSGSGPTCAFLCESADAAVAVAAELAGAGVARSVRTASGPVPGARVIDPES</sequence>
<reference key="1">
    <citation type="journal article" date="2004" name="Proc. Natl. Acad. Sci. U.S.A.">
        <title>The complete genomic sequence of Nocardia farcinica IFM 10152.</title>
        <authorList>
            <person name="Ishikawa J."/>
            <person name="Yamashita A."/>
            <person name="Mikami Y."/>
            <person name="Hoshino Y."/>
            <person name="Kurita H."/>
            <person name="Hotta K."/>
            <person name="Shiba T."/>
            <person name="Hattori M."/>
        </authorList>
    </citation>
    <scope>NUCLEOTIDE SEQUENCE [LARGE SCALE GENOMIC DNA]</scope>
    <source>
        <strain>IFM 10152</strain>
    </source>
</reference>
<keyword id="KW-0067">ATP-binding</keyword>
<keyword id="KW-0414">Isoprene biosynthesis</keyword>
<keyword id="KW-0418">Kinase</keyword>
<keyword id="KW-0547">Nucleotide-binding</keyword>
<keyword id="KW-1185">Reference proteome</keyword>
<keyword id="KW-0808">Transferase</keyword>
<name>ISPE_NOCFA</name>
<evidence type="ECO:0000255" key="1">
    <source>
        <dbReference type="HAMAP-Rule" id="MF_00061"/>
    </source>
</evidence>
<accession>Q5YPY8</accession>